<dbReference type="EC" id="2.7.7.8" evidence="1"/>
<dbReference type="EMBL" id="CP001096">
    <property type="protein sequence ID" value="ACE98996.1"/>
    <property type="molecule type" value="Genomic_DNA"/>
</dbReference>
<dbReference type="RefSeq" id="WP_012494150.1">
    <property type="nucleotide sequence ID" value="NC_011004.1"/>
</dbReference>
<dbReference type="SMR" id="B3QAB0"/>
<dbReference type="KEGG" id="rpt:Rpal_0436"/>
<dbReference type="HOGENOM" id="CLU_004217_2_2_5"/>
<dbReference type="OrthoDB" id="9804305at2"/>
<dbReference type="Proteomes" id="UP000001725">
    <property type="component" value="Chromosome"/>
</dbReference>
<dbReference type="GO" id="GO:0005829">
    <property type="term" value="C:cytosol"/>
    <property type="evidence" value="ECO:0007669"/>
    <property type="project" value="TreeGrafter"/>
</dbReference>
<dbReference type="GO" id="GO:0000175">
    <property type="term" value="F:3'-5'-RNA exonuclease activity"/>
    <property type="evidence" value="ECO:0007669"/>
    <property type="project" value="TreeGrafter"/>
</dbReference>
<dbReference type="GO" id="GO:0000287">
    <property type="term" value="F:magnesium ion binding"/>
    <property type="evidence" value="ECO:0007669"/>
    <property type="project" value="UniProtKB-UniRule"/>
</dbReference>
<dbReference type="GO" id="GO:0004654">
    <property type="term" value="F:polyribonucleotide nucleotidyltransferase activity"/>
    <property type="evidence" value="ECO:0007669"/>
    <property type="project" value="UniProtKB-UniRule"/>
</dbReference>
<dbReference type="GO" id="GO:0003723">
    <property type="term" value="F:RNA binding"/>
    <property type="evidence" value="ECO:0007669"/>
    <property type="project" value="UniProtKB-UniRule"/>
</dbReference>
<dbReference type="GO" id="GO:0006402">
    <property type="term" value="P:mRNA catabolic process"/>
    <property type="evidence" value="ECO:0007669"/>
    <property type="project" value="UniProtKB-UniRule"/>
</dbReference>
<dbReference type="GO" id="GO:0006396">
    <property type="term" value="P:RNA processing"/>
    <property type="evidence" value="ECO:0007669"/>
    <property type="project" value="InterPro"/>
</dbReference>
<dbReference type="CDD" id="cd02393">
    <property type="entry name" value="KH-I_PNPase"/>
    <property type="match status" value="1"/>
</dbReference>
<dbReference type="CDD" id="cd11363">
    <property type="entry name" value="RNase_PH_PNPase_1"/>
    <property type="match status" value="1"/>
</dbReference>
<dbReference type="CDD" id="cd11364">
    <property type="entry name" value="RNase_PH_PNPase_2"/>
    <property type="match status" value="1"/>
</dbReference>
<dbReference type="CDD" id="cd04472">
    <property type="entry name" value="S1_PNPase"/>
    <property type="match status" value="1"/>
</dbReference>
<dbReference type="FunFam" id="2.40.50.140:FF:000107">
    <property type="entry name" value="Polyribonucleotide nucleotidyltransferase"/>
    <property type="match status" value="1"/>
</dbReference>
<dbReference type="FunFam" id="3.30.1370.10:FF:000001">
    <property type="entry name" value="Polyribonucleotide nucleotidyltransferase"/>
    <property type="match status" value="1"/>
</dbReference>
<dbReference type="FunFam" id="3.30.230.70:FF:000001">
    <property type="entry name" value="Polyribonucleotide nucleotidyltransferase"/>
    <property type="match status" value="1"/>
</dbReference>
<dbReference type="FunFam" id="3.30.230.70:FF:000002">
    <property type="entry name" value="Polyribonucleotide nucleotidyltransferase"/>
    <property type="match status" value="1"/>
</dbReference>
<dbReference type="Gene3D" id="3.30.230.70">
    <property type="entry name" value="GHMP Kinase, N-terminal domain"/>
    <property type="match status" value="2"/>
</dbReference>
<dbReference type="Gene3D" id="3.30.1370.10">
    <property type="entry name" value="K Homology domain, type 1"/>
    <property type="match status" value="1"/>
</dbReference>
<dbReference type="Gene3D" id="2.40.50.140">
    <property type="entry name" value="Nucleic acid-binding proteins"/>
    <property type="match status" value="1"/>
</dbReference>
<dbReference type="HAMAP" id="MF_01595">
    <property type="entry name" value="PNPase"/>
    <property type="match status" value="1"/>
</dbReference>
<dbReference type="InterPro" id="IPR001247">
    <property type="entry name" value="ExoRNase_PH_dom1"/>
</dbReference>
<dbReference type="InterPro" id="IPR015847">
    <property type="entry name" value="ExoRNase_PH_dom2"/>
</dbReference>
<dbReference type="InterPro" id="IPR036345">
    <property type="entry name" value="ExoRNase_PH_dom2_sf"/>
</dbReference>
<dbReference type="InterPro" id="IPR004087">
    <property type="entry name" value="KH_dom"/>
</dbReference>
<dbReference type="InterPro" id="IPR004088">
    <property type="entry name" value="KH_dom_type_1"/>
</dbReference>
<dbReference type="InterPro" id="IPR036612">
    <property type="entry name" value="KH_dom_type_1_sf"/>
</dbReference>
<dbReference type="InterPro" id="IPR012340">
    <property type="entry name" value="NA-bd_OB-fold"/>
</dbReference>
<dbReference type="InterPro" id="IPR012162">
    <property type="entry name" value="PNPase"/>
</dbReference>
<dbReference type="InterPro" id="IPR027408">
    <property type="entry name" value="PNPase/RNase_PH_dom_sf"/>
</dbReference>
<dbReference type="InterPro" id="IPR015848">
    <property type="entry name" value="PNPase_PH_RNA-bd_bac/org-type"/>
</dbReference>
<dbReference type="InterPro" id="IPR036456">
    <property type="entry name" value="PNPase_PH_RNA-bd_sf"/>
</dbReference>
<dbReference type="InterPro" id="IPR020568">
    <property type="entry name" value="Ribosomal_Su5_D2-typ_SF"/>
</dbReference>
<dbReference type="InterPro" id="IPR003029">
    <property type="entry name" value="S1_domain"/>
</dbReference>
<dbReference type="NCBIfam" id="TIGR03591">
    <property type="entry name" value="polynuc_phos"/>
    <property type="match status" value="1"/>
</dbReference>
<dbReference type="NCBIfam" id="NF008805">
    <property type="entry name" value="PRK11824.1"/>
    <property type="match status" value="1"/>
</dbReference>
<dbReference type="PANTHER" id="PTHR11252">
    <property type="entry name" value="POLYRIBONUCLEOTIDE NUCLEOTIDYLTRANSFERASE"/>
    <property type="match status" value="1"/>
</dbReference>
<dbReference type="PANTHER" id="PTHR11252:SF0">
    <property type="entry name" value="POLYRIBONUCLEOTIDE NUCLEOTIDYLTRANSFERASE 1, MITOCHONDRIAL"/>
    <property type="match status" value="1"/>
</dbReference>
<dbReference type="Pfam" id="PF00013">
    <property type="entry name" value="KH_1"/>
    <property type="match status" value="1"/>
</dbReference>
<dbReference type="Pfam" id="PF03726">
    <property type="entry name" value="PNPase"/>
    <property type="match status" value="1"/>
</dbReference>
<dbReference type="Pfam" id="PF01138">
    <property type="entry name" value="RNase_PH"/>
    <property type="match status" value="2"/>
</dbReference>
<dbReference type="Pfam" id="PF03725">
    <property type="entry name" value="RNase_PH_C"/>
    <property type="match status" value="2"/>
</dbReference>
<dbReference type="Pfam" id="PF00575">
    <property type="entry name" value="S1"/>
    <property type="match status" value="1"/>
</dbReference>
<dbReference type="PIRSF" id="PIRSF005499">
    <property type="entry name" value="PNPase"/>
    <property type="match status" value="1"/>
</dbReference>
<dbReference type="SMART" id="SM00322">
    <property type="entry name" value="KH"/>
    <property type="match status" value="1"/>
</dbReference>
<dbReference type="SMART" id="SM00316">
    <property type="entry name" value="S1"/>
    <property type="match status" value="1"/>
</dbReference>
<dbReference type="SUPFAM" id="SSF54791">
    <property type="entry name" value="Eukaryotic type KH-domain (KH-domain type I)"/>
    <property type="match status" value="1"/>
</dbReference>
<dbReference type="SUPFAM" id="SSF50249">
    <property type="entry name" value="Nucleic acid-binding proteins"/>
    <property type="match status" value="1"/>
</dbReference>
<dbReference type="SUPFAM" id="SSF46915">
    <property type="entry name" value="Polynucleotide phosphorylase/guanosine pentaphosphate synthase (PNPase/GPSI), domain 3"/>
    <property type="match status" value="1"/>
</dbReference>
<dbReference type="SUPFAM" id="SSF55666">
    <property type="entry name" value="Ribonuclease PH domain 2-like"/>
    <property type="match status" value="2"/>
</dbReference>
<dbReference type="SUPFAM" id="SSF54211">
    <property type="entry name" value="Ribosomal protein S5 domain 2-like"/>
    <property type="match status" value="2"/>
</dbReference>
<dbReference type="PROSITE" id="PS50084">
    <property type="entry name" value="KH_TYPE_1"/>
    <property type="match status" value="1"/>
</dbReference>
<dbReference type="PROSITE" id="PS50126">
    <property type="entry name" value="S1"/>
    <property type="match status" value="1"/>
</dbReference>
<keyword id="KW-0963">Cytoplasm</keyword>
<keyword id="KW-0460">Magnesium</keyword>
<keyword id="KW-0479">Metal-binding</keyword>
<keyword id="KW-0548">Nucleotidyltransferase</keyword>
<keyword id="KW-0694">RNA-binding</keyword>
<keyword id="KW-0808">Transferase</keyword>
<accession>B3QAB0</accession>
<reference key="1">
    <citation type="submission" date="2008-05" db="EMBL/GenBank/DDBJ databases">
        <title>Complete sequence of Rhodopseudomonas palustris TIE-1.</title>
        <authorList>
            <consortium name="US DOE Joint Genome Institute"/>
            <person name="Lucas S."/>
            <person name="Copeland A."/>
            <person name="Lapidus A."/>
            <person name="Glavina del Rio T."/>
            <person name="Dalin E."/>
            <person name="Tice H."/>
            <person name="Pitluck S."/>
            <person name="Chain P."/>
            <person name="Malfatti S."/>
            <person name="Shin M."/>
            <person name="Vergez L."/>
            <person name="Lang D."/>
            <person name="Schmutz J."/>
            <person name="Larimer F."/>
            <person name="Land M."/>
            <person name="Hauser L."/>
            <person name="Kyrpides N."/>
            <person name="Mikhailova N."/>
            <person name="Emerson D."/>
            <person name="Newman D.K."/>
            <person name="Roden E."/>
            <person name="Richardson P."/>
        </authorList>
    </citation>
    <scope>NUCLEOTIDE SEQUENCE [LARGE SCALE GENOMIC DNA]</scope>
    <source>
        <strain>TIE-1</strain>
    </source>
</reference>
<protein>
    <recommendedName>
        <fullName evidence="1">Polyribonucleotide nucleotidyltransferase</fullName>
        <ecNumber evidence="1">2.7.7.8</ecNumber>
    </recommendedName>
    <alternativeName>
        <fullName evidence="1">Polynucleotide phosphorylase</fullName>
        <shortName evidence="1">PNPase</shortName>
    </alternativeName>
</protein>
<proteinExistence type="inferred from homology"/>
<name>PNP_RHOPT</name>
<sequence length="722" mass="78354">MFNIHSVEIDWGGRPLKLETGKVARQADGAVVATYGETVVLATVVAAKSPREGVDFLPLTVDYQEKAYAAGRIPGGYFKREGRPTEKETLVSRLIDRPIRPLFADGWRNETQVIVTVLSHDMENDPDVLAMVAASAALTLSGVPFKGPIGAARVGFINDEYVLNPVLDEMAETQLELVVAGTADAVLMVESEAKELSEEIMLGAVMFGHRHFQPVIDAIIDLAEKAAKEPRELTVVDDSEIEKEMLGLVEQELRAAYAIPVKQDRYAAVGKVKEKAIAHFFPEGQEPKYDKLRIAGVFKELEAKIVRWNILDTGKRIDGRDSKTVRNILAQVGVLPRTHGSALFTRGETQALVVTTLGTGEDEQYVDSLSGTYKETFLLHYNFPPYSVGETGRLGGTKRREIGHGKLAWRAIHPVLPPHHEFPYTIRVVSEITESNGSSSMASVCGASLALMDAGVPLKRPTAGIAMGLILEGERFAVLSDILGDEDHLGDMDFKVAGTEQGITSLQMDIKIAGITEEIMKVALGQAKDGRIHILGEMSKALDRARAELGEHAPRIETFKIPTDKIREVIGTGGKVIREIVEKTGAKVNIEDDGTVKVASSDGESIKAAIKWIKSIASDPEIGEIYEGTVVKVMEFGAFVNFFGAKDGLVHISQLAAGRVQKTSDVVKEGDKVKVKLLGFDDRGKTRLSMKVVDQTTGEDLEAKQKAEAKAEGEAPAQAAGE</sequence>
<evidence type="ECO:0000255" key="1">
    <source>
        <dbReference type="HAMAP-Rule" id="MF_01595"/>
    </source>
</evidence>
<evidence type="ECO:0000256" key="2">
    <source>
        <dbReference type="SAM" id="MobiDB-lite"/>
    </source>
</evidence>
<comment type="function">
    <text evidence="1">Involved in mRNA degradation. Catalyzes the phosphorolysis of single-stranded polyribonucleotides processively in the 3'- to 5'-direction.</text>
</comment>
<comment type="catalytic activity">
    <reaction evidence="1">
        <text>RNA(n+1) + phosphate = RNA(n) + a ribonucleoside 5'-diphosphate</text>
        <dbReference type="Rhea" id="RHEA:22096"/>
        <dbReference type="Rhea" id="RHEA-COMP:14527"/>
        <dbReference type="Rhea" id="RHEA-COMP:17342"/>
        <dbReference type="ChEBI" id="CHEBI:43474"/>
        <dbReference type="ChEBI" id="CHEBI:57930"/>
        <dbReference type="ChEBI" id="CHEBI:140395"/>
        <dbReference type="EC" id="2.7.7.8"/>
    </reaction>
</comment>
<comment type="cofactor">
    <cofactor evidence="1">
        <name>Mg(2+)</name>
        <dbReference type="ChEBI" id="CHEBI:18420"/>
    </cofactor>
</comment>
<comment type="subcellular location">
    <subcellularLocation>
        <location evidence="1">Cytoplasm</location>
    </subcellularLocation>
</comment>
<comment type="similarity">
    <text evidence="1">Belongs to the polyribonucleotide nucleotidyltransferase family.</text>
</comment>
<gene>
    <name evidence="1" type="primary">pnp</name>
    <name type="ordered locus">Rpal_0436</name>
</gene>
<feature type="chain" id="PRO_1000192485" description="Polyribonucleotide nucleotidyltransferase">
    <location>
        <begin position="1"/>
        <end position="722"/>
    </location>
</feature>
<feature type="domain" description="KH" evidence="1">
    <location>
        <begin position="554"/>
        <end position="613"/>
    </location>
</feature>
<feature type="domain" description="S1 motif" evidence="1">
    <location>
        <begin position="623"/>
        <end position="691"/>
    </location>
</feature>
<feature type="region of interest" description="Disordered" evidence="2">
    <location>
        <begin position="697"/>
        <end position="722"/>
    </location>
</feature>
<feature type="compositionally biased region" description="Basic and acidic residues" evidence="2">
    <location>
        <begin position="701"/>
        <end position="713"/>
    </location>
</feature>
<feature type="binding site" evidence="1">
    <location>
        <position position="487"/>
    </location>
    <ligand>
        <name>Mg(2+)</name>
        <dbReference type="ChEBI" id="CHEBI:18420"/>
    </ligand>
</feature>
<feature type="binding site" evidence="1">
    <location>
        <position position="493"/>
    </location>
    <ligand>
        <name>Mg(2+)</name>
        <dbReference type="ChEBI" id="CHEBI:18420"/>
    </ligand>
</feature>
<organism>
    <name type="scientific">Rhodopseudomonas palustris (strain TIE-1)</name>
    <dbReference type="NCBI Taxonomy" id="395960"/>
    <lineage>
        <taxon>Bacteria</taxon>
        <taxon>Pseudomonadati</taxon>
        <taxon>Pseudomonadota</taxon>
        <taxon>Alphaproteobacteria</taxon>
        <taxon>Hyphomicrobiales</taxon>
        <taxon>Nitrobacteraceae</taxon>
        <taxon>Rhodopseudomonas</taxon>
    </lineage>
</organism>